<accession>P0DP10</accession>
<organism>
    <name type="scientific">Conus figulinus</name>
    <name type="common">Fig cone</name>
    <dbReference type="NCBI Taxonomy" id="101301"/>
    <lineage>
        <taxon>Eukaryota</taxon>
        <taxon>Metazoa</taxon>
        <taxon>Spiralia</taxon>
        <taxon>Lophotrochozoa</taxon>
        <taxon>Mollusca</taxon>
        <taxon>Gastropoda</taxon>
        <taxon>Caenogastropoda</taxon>
        <taxon>Neogastropoda</taxon>
        <taxon>Conoidea</taxon>
        <taxon>Conidae</taxon>
        <taxon>Conus</taxon>
        <taxon>Dendroconus</taxon>
    </lineage>
</organism>
<reference key="1">
    <citation type="journal article" date="2015" name="J. Pept. Sci.">
        <title>Novel M-Superfamily and T-Superfamily conotoxins and contryphans from the vermivorous snail Conus figulinus.</title>
        <authorList>
            <person name="Rajesh R.P."/>
        </authorList>
    </citation>
    <scope>PROTEIN SEQUENCE</scope>
    <scope>IDENTIFICATION BY MASS SPECTROMETRY</scope>
    <scope>MASS SPECTROMETRY</scope>
    <scope>SUBCELLULAR LOCATION</scope>
    <scope>HYDROXYLATION AT PRO-11</scope>
    <source>
        <tissue>Venom</tissue>
    </source>
</reference>
<evidence type="ECO:0000250" key="1">
    <source>
        <dbReference type="UniProtKB" id="P0CI24"/>
    </source>
</evidence>
<evidence type="ECO:0000269" key="2">
    <source>
    </source>
</evidence>
<evidence type="ECO:0000303" key="3">
    <source>
    </source>
</evidence>
<evidence type="ECO:0000305" key="4"/>
<evidence type="ECO:0000305" key="5">
    <source>
    </source>
</evidence>
<protein>
    <recommendedName>
        <fullName evidence="3">Conotoxin Fi3a</fullName>
    </recommendedName>
    <alternativeName>
        <fullName evidence="3">Conotoxin Fi3b</fullName>
    </alternativeName>
</protein>
<keyword id="KW-0903">Direct protein sequencing</keyword>
<keyword id="KW-1015">Disulfide bond</keyword>
<keyword id="KW-0379">Hydroxylation</keyword>
<keyword id="KW-0528">Neurotoxin</keyword>
<keyword id="KW-0964">Secreted</keyword>
<keyword id="KW-0800">Toxin</keyword>
<sequence length="15" mass="1693">CCSQDCRVCIPCCPY</sequence>
<name>M3A_CONFI</name>
<feature type="peptide" id="PRO_0000439621" description="Conotoxin Fi3a" evidence="2">
    <location>
        <begin position="1"/>
        <end position="15"/>
    </location>
</feature>
<feature type="modified residue" description="4-hydroxyproline; partial" evidence="2">
    <location>
        <position position="11"/>
    </location>
</feature>
<feature type="disulfide bond" evidence="1">
    <location>
        <begin position="1"/>
        <end position="13"/>
    </location>
</feature>
<feature type="disulfide bond" evidence="1">
    <location>
        <begin position="2"/>
        <end position="9"/>
    </location>
</feature>
<feature type="disulfide bond" evidence="1">
    <location>
        <begin position="6"/>
        <end position="12"/>
    </location>
</feature>
<feature type="unsure residue" description="I or L" evidence="5">
    <location>
        <position position="10"/>
    </location>
</feature>
<proteinExistence type="evidence at protein level"/>
<comment type="function">
    <text evidence="4">May act as a neurotoxin.</text>
</comment>
<comment type="subcellular location">
    <subcellularLocation>
        <location evidence="2">Secreted</location>
    </subcellularLocation>
</comment>
<comment type="tissue specificity">
    <text evidence="5">Expressed by the venom duct.</text>
</comment>
<comment type="domain">
    <text evidence="4">The cysteine framework is III (CC-C-C-CC). Classified in the M-2 branch, since 4 residues stand between the fourth and the fifth cysteine residues.</text>
</comment>
<comment type="PTM">
    <text evidence="2">Contains 3 disulfide bonds.</text>
</comment>
<comment type="PTM">
    <text evidence="2">Hydroxylated on Pro-11 only in conotoxin Fi3b.</text>
</comment>
<comment type="mass spectrometry" mass="1685.8" method="Unknown" evidence="2">
    <text>Non-hydroxylated (Fi3a).</text>
</comment>
<comment type="mass spectrometry" mass="1701.6" method="Unknown" evidence="2">
    <text>Hydroxylated (Fi3b).</text>
</comment>
<comment type="similarity">
    <text evidence="4">Belongs to the conotoxin M superfamily.</text>
</comment>
<dbReference type="GO" id="GO:0005576">
    <property type="term" value="C:extracellular region"/>
    <property type="evidence" value="ECO:0007669"/>
    <property type="project" value="UniProtKB-SubCell"/>
</dbReference>
<dbReference type="GO" id="GO:0090729">
    <property type="term" value="F:toxin activity"/>
    <property type="evidence" value="ECO:0007669"/>
    <property type="project" value="UniProtKB-KW"/>
</dbReference>